<reference key="1">
    <citation type="journal article" date="2002" name="Proc. Natl. Acad. Sci. U.S.A.">
        <title>The complete genome sequence of Chlorobium tepidum TLS, a photosynthetic, anaerobic, green-sulfur bacterium.</title>
        <authorList>
            <person name="Eisen J.A."/>
            <person name="Nelson K.E."/>
            <person name="Paulsen I.T."/>
            <person name="Heidelberg J.F."/>
            <person name="Wu M."/>
            <person name="Dodson R.J."/>
            <person name="DeBoy R.T."/>
            <person name="Gwinn M.L."/>
            <person name="Nelson W.C."/>
            <person name="Haft D.H."/>
            <person name="Hickey E.K."/>
            <person name="Peterson J.D."/>
            <person name="Durkin A.S."/>
            <person name="Kolonay J.F."/>
            <person name="Yang F."/>
            <person name="Holt I.E."/>
            <person name="Umayam L.A."/>
            <person name="Mason T.M."/>
            <person name="Brenner M."/>
            <person name="Shea T.P."/>
            <person name="Parksey D.S."/>
            <person name="Nierman W.C."/>
            <person name="Feldblyum T.V."/>
            <person name="Hansen C.L."/>
            <person name="Craven M.B."/>
            <person name="Radune D."/>
            <person name="Vamathevan J.J."/>
            <person name="Khouri H.M."/>
            <person name="White O."/>
            <person name="Gruber T.M."/>
            <person name="Ketchum K.A."/>
            <person name="Venter J.C."/>
            <person name="Tettelin H."/>
            <person name="Bryant D.A."/>
            <person name="Fraser C.M."/>
        </authorList>
    </citation>
    <scope>NUCLEOTIDE SEQUENCE [LARGE SCALE GENOMIC DNA]</scope>
    <source>
        <strain>ATCC 49652 / DSM 12025 / NBRC 103806 / TLS</strain>
    </source>
</reference>
<accession>Q8KDK5</accession>
<dbReference type="EC" id="3.5.2.3" evidence="1"/>
<dbReference type="EMBL" id="AE006470">
    <property type="protein sequence ID" value="AAM72275.1"/>
    <property type="molecule type" value="Genomic_DNA"/>
</dbReference>
<dbReference type="RefSeq" id="NP_661933.1">
    <property type="nucleotide sequence ID" value="NC_002932.3"/>
</dbReference>
<dbReference type="RefSeq" id="WP_010932720.1">
    <property type="nucleotide sequence ID" value="NC_002932.3"/>
</dbReference>
<dbReference type="SMR" id="Q8KDK5"/>
<dbReference type="STRING" id="194439.CT1042"/>
<dbReference type="EnsemblBacteria" id="AAM72275">
    <property type="protein sequence ID" value="AAM72275"/>
    <property type="gene ID" value="CT1042"/>
</dbReference>
<dbReference type="KEGG" id="cte:CT1042"/>
<dbReference type="PATRIC" id="fig|194439.7.peg.950"/>
<dbReference type="eggNOG" id="COG0044">
    <property type="taxonomic scope" value="Bacteria"/>
</dbReference>
<dbReference type="HOGENOM" id="CLU_015572_1_0_10"/>
<dbReference type="OrthoDB" id="9765462at2"/>
<dbReference type="UniPathway" id="UPA00070">
    <property type="reaction ID" value="UER00117"/>
</dbReference>
<dbReference type="Proteomes" id="UP000001007">
    <property type="component" value="Chromosome"/>
</dbReference>
<dbReference type="GO" id="GO:0005737">
    <property type="term" value="C:cytoplasm"/>
    <property type="evidence" value="ECO:0007669"/>
    <property type="project" value="TreeGrafter"/>
</dbReference>
<dbReference type="GO" id="GO:0004038">
    <property type="term" value="F:allantoinase activity"/>
    <property type="evidence" value="ECO:0007669"/>
    <property type="project" value="TreeGrafter"/>
</dbReference>
<dbReference type="GO" id="GO:0004151">
    <property type="term" value="F:dihydroorotase activity"/>
    <property type="evidence" value="ECO:0007669"/>
    <property type="project" value="UniProtKB-UniRule"/>
</dbReference>
<dbReference type="GO" id="GO:0008270">
    <property type="term" value="F:zinc ion binding"/>
    <property type="evidence" value="ECO:0007669"/>
    <property type="project" value="UniProtKB-UniRule"/>
</dbReference>
<dbReference type="GO" id="GO:0044205">
    <property type="term" value="P:'de novo' UMP biosynthetic process"/>
    <property type="evidence" value="ECO:0007669"/>
    <property type="project" value="UniProtKB-UniRule"/>
</dbReference>
<dbReference type="GO" id="GO:0006145">
    <property type="term" value="P:purine nucleobase catabolic process"/>
    <property type="evidence" value="ECO:0007669"/>
    <property type="project" value="TreeGrafter"/>
</dbReference>
<dbReference type="CDD" id="cd01317">
    <property type="entry name" value="DHOase_IIa"/>
    <property type="match status" value="1"/>
</dbReference>
<dbReference type="Gene3D" id="3.20.20.140">
    <property type="entry name" value="Metal-dependent hydrolases"/>
    <property type="match status" value="1"/>
</dbReference>
<dbReference type="Gene3D" id="2.30.40.10">
    <property type="entry name" value="Urease, subunit C, domain 1"/>
    <property type="match status" value="1"/>
</dbReference>
<dbReference type="HAMAP" id="MF_00220_B">
    <property type="entry name" value="PyrC_classI_B"/>
    <property type="match status" value="1"/>
</dbReference>
<dbReference type="InterPro" id="IPR006680">
    <property type="entry name" value="Amidohydro-rel"/>
</dbReference>
<dbReference type="InterPro" id="IPR004722">
    <property type="entry name" value="DHOase"/>
</dbReference>
<dbReference type="InterPro" id="IPR050138">
    <property type="entry name" value="DHOase/Allantoinase_Hydrolase"/>
</dbReference>
<dbReference type="InterPro" id="IPR002195">
    <property type="entry name" value="Dihydroorotase_CS"/>
</dbReference>
<dbReference type="InterPro" id="IPR011059">
    <property type="entry name" value="Metal-dep_hydrolase_composite"/>
</dbReference>
<dbReference type="InterPro" id="IPR032466">
    <property type="entry name" value="Metal_Hydrolase"/>
</dbReference>
<dbReference type="NCBIfam" id="NF006842">
    <property type="entry name" value="PRK09357.2-3"/>
    <property type="match status" value="1"/>
</dbReference>
<dbReference type="NCBIfam" id="TIGR00857">
    <property type="entry name" value="pyrC_multi"/>
    <property type="match status" value="1"/>
</dbReference>
<dbReference type="PANTHER" id="PTHR43668">
    <property type="entry name" value="ALLANTOINASE"/>
    <property type="match status" value="1"/>
</dbReference>
<dbReference type="PANTHER" id="PTHR43668:SF2">
    <property type="entry name" value="ALLANTOINASE"/>
    <property type="match status" value="1"/>
</dbReference>
<dbReference type="Pfam" id="PF01979">
    <property type="entry name" value="Amidohydro_1"/>
    <property type="match status" value="1"/>
</dbReference>
<dbReference type="SUPFAM" id="SSF51338">
    <property type="entry name" value="Composite domain of metallo-dependent hydrolases"/>
    <property type="match status" value="1"/>
</dbReference>
<dbReference type="SUPFAM" id="SSF51556">
    <property type="entry name" value="Metallo-dependent hydrolases"/>
    <property type="match status" value="1"/>
</dbReference>
<dbReference type="PROSITE" id="PS00483">
    <property type="entry name" value="DIHYDROOROTASE_2"/>
    <property type="match status" value="1"/>
</dbReference>
<sequence length="439" mass="47039">MSTLFLNARLLNPAENLDTVGSIKIGDDGLIEAVATGGESIPAKAEDNVIDLAGKVLAPGLFDMHCHFREPGQEYKETLETGSAAAVAGGFTGVALMPNTRPVIDSPLGVAYIRHHSAGLPIDLEVIGAMTVESRGEALAPYGKYASYSVKAVSDDGTAIQSSQIMRLAIEYAANFDLLLIQHAEDKHLTAGGIMNDGAVSAMLGLKGIPEVAEPIMIARDLQLIAWLKKHKLNGAVAEPRYHVAHISTAESVALVRKAKAAGLKVTCEVTPHHFTLTEHDLSSSIEKGNFIMKPPLASVENRDALIEGLRDGTIDAIATDHAPHAKHEKECPPDQAAFGIIGLETSLGLTITELVDKGVITLSQAIELLSTNPRRIMGLETILFRAGRKANLTIIDPDCEWIVSESDFGSKSRNTPFMGRKLKGRALGIYHNSKLIMR</sequence>
<name>PYRC_CHLTE</name>
<gene>
    <name evidence="1" type="primary">pyrC</name>
    <name type="ordered locus">CT1042</name>
</gene>
<proteinExistence type="inferred from homology"/>
<feature type="chain" id="PRO_0000147230" description="Dihydroorotase">
    <location>
        <begin position="1"/>
        <end position="439"/>
    </location>
</feature>
<feature type="active site" evidence="1">
    <location>
        <position position="321"/>
    </location>
</feature>
<feature type="binding site" evidence="1">
    <location>
        <position position="65"/>
    </location>
    <ligand>
        <name>Zn(2+)</name>
        <dbReference type="ChEBI" id="CHEBI:29105"/>
        <label>1</label>
    </ligand>
</feature>
<feature type="binding site" evidence="1">
    <location>
        <begin position="67"/>
        <end position="69"/>
    </location>
    <ligand>
        <name>substrate</name>
    </ligand>
</feature>
<feature type="binding site" evidence="1">
    <location>
        <position position="67"/>
    </location>
    <ligand>
        <name>Zn(2+)</name>
        <dbReference type="ChEBI" id="CHEBI:29105"/>
        <label>1</label>
    </ligand>
</feature>
<feature type="binding site" evidence="1">
    <location>
        <position position="99"/>
    </location>
    <ligand>
        <name>substrate</name>
    </ligand>
</feature>
<feature type="binding site" evidence="1">
    <location>
        <position position="156"/>
    </location>
    <ligand>
        <name>Zn(2+)</name>
        <dbReference type="ChEBI" id="CHEBI:29105"/>
        <label>1</label>
    </ligand>
</feature>
<feature type="binding site" evidence="1">
    <location>
        <position position="156"/>
    </location>
    <ligand>
        <name>Zn(2+)</name>
        <dbReference type="ChEBI" id="CHEBI:29105"/>
        <label>2</label>
    </ligand>
</feature>
<feature type="binding site" evidence="1">
    <location>
        <position position="183"/>
    </location>
    <ligand>
        <name>Zn(2+)</name>
        <dbReference type="ChEBI" id="CHEBI:29105"/>
        <label>2</label>
    </ligand>
</feature>
<feature type="binding site" evidence="1">
    <location>
        <position position="246"/>
    </location>
    <ligand>
        <name>Zn(2+)</name>
        <dbReference type="ChEBI" id="CHEBI:29105"/>
        <label>2</label>
    </ligand>
</feature>
<feature type="binding site" evidence="1">
    <location>
        <position position="321"/>
    </location>
    <ligand>
        <name>Zn(2+)</name>
        <dbReference type="ChEBI" id="CHEBI:29105"/>
        <label>1</label>
    </ligand>
</feature>
<feature type="binding site" evidence="1">
    <location>
        <position position="325"/>
    </location>
    <ligand>
        <name>substrate</name>
    </ligand>
</feature>
<feature type="binding site" evidence="1">
    <location>
        <begin position="339"/>
        <end position="340"/>
    </location>
    <ligand>
        <name>substrate</name>
    </ligand>
</feature>
<organism>
    <name type="scientific">Chlorobaculum tepidum (strain ATCC 49652 / DSM 12025 / NBRC 103806 / TLS)</name>
    <name type="common">Chlorobium tepidum</name>
    <dbReference type="NCBI Taxonomy" id="194439"/>
    <lineage>
        <taxon>Bacteria</taxon>
        <taxon>Pseudomonadati</taxon>
        <taxon>Chlorobiota</taxon>
        <taxon>Chlorobiia</taxon>
        <taxon>Chlorobiales</taxon>
        <taxon>Chlorobiaceae</taxon>
        <taxon>Chlorobaculum</taxon>
    </lineage>
</organism>
<comment type="function">
    <text evidence="1">Catalyzes the reversible cyclization of carbamoyl aspartate to dihydroorotate.</text>
</comment>
<comment type="catalytic activity">
    <reaction evidence="1">
        <text>(S)-dihydroorotate + H2O = N-carbamoyl-L-aspartate + H(+)</text>
        <dbReference type="Rhea" id="RHEA:24296"/>
        <dbReference type="ChEBI" id="CHEBI:15377"/>
        <dbReference type="ChEBI" id="CHEBI:15378"/>
        <dbReference type="ChEBI" id="CHEBI:30864"/>
        <dbReference type="ChEBI" id="CHEBI:32814"/>
        <dbReference type="EC" id="3.5.2.3"/>
    </reaction>
</comment>
<comment type="cofactor">
    <cofactor evidence="1">
        <name>Zn(2+)</name>
        <dbReference type="ChEBI" id="CHEBI:29105"/>
    </cofactor>
    <text evidence="1">Binds 2 Zn(2+) ions per subunit.</text>
</comment>
<comment type="pathway">
    <text evidence="1">Pyrimidine metabolism; UMP biosynthesis via de novo pathway; (S)-dihydroorotate from bicarbonate: step 3/3.</text>
</comment>
<comment type="similarity">
    <text evidence="1">Belongs to the metallo-dependent hydrolases superfamily. DHOase family. Class I DHOase subfamily.</text>
</comment>
<keyword id="KW-0378">Hydrolase</keyword>
<keyword id="KW-0479">Metal-binding</keyword>
<keyword id="KW-0665">Pyrimidine biosynthesis</keyword>
<keyword id="KW-1185">Reference proteome</keyword>
<keyword id="KW-0862">Zinc</keyword>
<evidence type="ECO:0000255" key="1">
    <source>
        <dbReference type="HAMAP-Rule" id="MF_00220"/>
    </source>
</evidence>
<protein>
    <recommendedName>
        <fullName evidence="1">Dihydroorotase</fullName>
        <shortName evidence="1">DHOase</shortName>
        <ecNumber evidence="1">3.5.2.3</ecNumber>
    </recommendedName>
</protein>